<sequence length="93" mass="10807">MQEHIIDLSERYALKLNENHVYILYKIELNENGTYQRKGGAVCKDLPSLLDKLIYCELMNEKVETLEDMRNVLHAIHSEVTRIAEIQATYAQA</sequence>
<organism>
    <name type="scientific">Haemophilus phage S2</name>
    <name type="common">Bacteriophage S2</name>
    <dbReference type="NCBI Taxonomy" id="53000"/>
    <lineage>
        <taxon>Viruses</taxon>
        <taxon>Duplodnaviria</taxon>
        <taxon>Heunggongvirae</taxon>
        <taxon>Uroviricota</taxon>
        <taxon>Caudoviricetes</taxon>
    </lineage>
</organism>
<reference key="1">
    <citation type="submission" date="1996-11" db="EMBL/GenBank/DDBJ databases">
        <authorList>
            <person name="Skowronek K."/>
            <person name="Baranowski S."/>
        </authorList>
    </citation>
    <scope>NUCLEOTIDE SEQUENCE [GENOMIC DNA]</scope>
</reference>
<organismHost>
    <name type="scientific">Enterococcus</name>
    <dbReference type="NCBI Taxonomy" id="1350"/>
</organismHost>
<accession>P69623</accession>
<accession>P51709</accession>
<feature type="chain" id="PRO_0000165324" description="Uncharacterized 10.8 kDa protein in cox-rep intergenic region">
    <location>
        <begin position="1"/>
        <end position="93"/>
    </location>
</feature>
<proteinExistence type="predicted"/>
<dbReference type="EMBL" id="Z71579">
    <property type="protein sequence ID" value="CAA96228.1"/>
    <property type="molecule type" value="Genomic_DNA"/>
</dbReference>
<dbReference type="SMR" id="P69623"/>
<protein>
    <recommendedName>
        <fullName>Uncharacterized 10.8 kDa protein in cox-rep intergenic region</fullName>
    </recommendedName>
    <alternativeName>
        <fullName>ORF24</fullName>
    </alternativeName>
    <alternativeName>
        <fullName>ORF8</fullName>
    </alternativeName>
</protein>
<name>YO08_BPS2</name>